<evidence type="ECO:0000250" key="1"/>
<evidence type="ECO:0000250" key="2">
    <source>
        <dbReference type="UniProtKB" id="Q8BG18"/>
    </source>
</evidence>
<evidence type="ECO:0000250" key="3">
    <source>
        <dbReference type="UniProtKB" id="Q8N987"/>
    </source>
</evidence>
<evidence type="ECO:0000250" key="4">
    <source>
        <dbReference type="UniProtKB" id="Q9ESB5"/>
    </source>
</evidence>
<evidence type="ECO:0000255" key="5"/>
<evidence type="ECO:0000255" key="6">
    <source>
        <dbReference type="PROSITE-ProRule" id="PRU00448"/>
    </source>
</evidence>
<evidence type="ECO:0000256" key="7">
    <source>
        <dbReference type="SAM" id="MobiDB-lite"/>
    </source>
</evidence>
<name>NECA1_PONAB</name>
<keyword id="KW-0106">Calcium</keyword>
<keyword id="KW-0175">Coiled coil</keyword>
<keyword id="KW-0963">Cytoplasm</keyword>
<keyword id="KW-0479">Metal-binding</keyword>
<keyword id="KW-0597">Phosphoprotein</keyword>
<keyword id="KW-1185">Reference proteome</keyword>
<keyword id="KW-0677">Repeat</keyword>
<gene>
    <name type="primary">NECAB1</name>
    <name type="synonym">EFCBP1</name>
</gene>
<accession>Q5R467</accession>
<proteinExistence type="evidence at transcript level"/>
<sequence>MEDSQETSPSSNNSSEELSSALHLSKGMSIFLDILRRADKNDDGKLSFEEFKAYFADGVLSGEELHELFHTIDTHNTNNLDTEELCEYFSQHLGEYENVLAALEDLNLSILKAMGKTKKDYQEASNLEQFVTRFLLKETLNQLQSLQNSLECAMETTEEQTRQERQGPAKPEVLSIQWPGKRSSRRVQRHNSFSPNSPQFNVSGPGLLEEDNQWMTQINRLQKLIDRLEKKDLKLEPLEEEIIEGNTKSHIMLVQRQMSVIEEDLEEFQLALKHYVESASSQSGCLRISIQKLSNESRYMIYEFWENSSVWNSHLQTNYSKTFQRSNVDFLETPELTSTMLVPASWWILNNN</sequence>
<organism>
    <name type="scientific">Pongo abelii</name>
    <name type="common">Sumatran orangutan</name>
    <name type="synonym">Pongo pygmaeus abelii</name>
    <dbReference type="NCBI Taxonomy" id="9601"/>
    <lineage>
        <taxon>Eukaryota</taxon>
        <taxon>Metazoa</taxon>
        <taxon>Chordata</taxon>
        <taxon>Craniata</taxon>
        <taxon>Vertebrata</taxon>
        <taxon>Euteleostomi</taxon>
        <taxon>Mammalia</taxon>
        <taxon>Eutheria</taxon>
        <taxon>Euarchontoglires</taxon>
        <taxon>Primates</taxon>
        <taxon>Haplorrhini</taxon>
        <taxon>Catarrhini</taxon>
        <taxon>Hominidae</taxon>
        <taxon>Pongo</taxon>
    </lineage>
</organism>
<protein>
    <recommendedName>
        <fullName>N-terminal EF-hand calcium-binding protein 1</fullName>
        <shortName>EF-hand calcium-binding protein 1</shortName>
    </recommendedName>
</protein>
<dbReference type="EMBL" id="CR861391">
    <property type="protein sequence ID" value="CAH93449.1"/>
    <property type="molecule type" value="mRNA"/>
</dbReference>
<dbReference type="RefSeq" id="NP_001127019.1">
    <property type="nucleotide sequence ID" value="NM_001133547.1"/>
</dbReference>
<dbReference type="SMR" id="Q5R467"/>
<dbReference type="FunCoup" id="Q5R467">
    <property type="interactions" value="1330"/>
</dbReference>
<dbReference type="STRING" id="9601.ENSPPYP00000021015"/>
<dbReference type="Ensembl" id="ENSPPYT00000021856.3">
    <property type="protein sequence ID" value="ENSPPYP00000021016.3"/>
    <property type="gene ID" value="ENSPPYG00000018736.3"/>
</dbReference>
<dbReference type="GeneID" id="100174044"/>
<dbReference type="KEGG" id="pon:100174044"/>
<dbReference type="CTD" id="64168"/>
<dbReference type="eggNOG" id="ENOG502QWRY">
    <property type="taxonomic scope" value="Eukaryota"/>
</dbReference>
<dbReference type="GeneTree" id="ENSGT00950000183131"/>
<dbReference type="InParanoid" id="Q5R467"/>
<dbReference type="OMA" id="EDSQWMI"/>
<dbReference type="OrthoDB" id="289247at2759"/>
<dbReference type="Proteomes" id="UP000001595">
    <property type="component" value="Chromosome 8"/>
</dbReference>
<dbReference type="GO" id="GO:0005929">
    <property type="term" value="C:cilium"/>
    <property type="evidence" value="ECO:0007669"/>
    <property type="project" value="Ensembl"/>
</dbReference>
<dbReference type="GO" id="GO:0005829">
    <property type="term" value="C:cytosol"/>
    <property type="evidence" value="ECO:0007669"/>
    <property type="project" value="Ensembl"/>
</dbReference>
<dbReference type="GO" id="GO:0005654">
    <property type="term" value="C:nucleoplasm"/>
    <property type="evidence" value="ECO:0007669"/>
    <property type="project" value="Ensembl"/>
</dbReference>
<dbReference type="GO" id="GO:0005509">
    <property type="term" value="F:calcium ion binding"/>
    <property type="evidence" value="ECO:0007669"/>
    <property type="project" value="InterPro"/>
</dbReference>
<dbReference type="GO" id="GO:0042802">
    <property type="term" value="F:identical protein binding"/>
    <property type="evidence" value="ECO:0007669"/>
    <property type="project" value="Ensembl"/>
</dbReference>
<dbReference type="GO" id="GO:0001835">
    <property type="term" value="P:blastocyst hatching"/>
    <property type="evidence" value="ECO:0007669"/>
    <property type="project" value="Ensembl"/>
</dbReference>
<dbReference type="GO" id="GO:0042984">
    <property type="term" value="P:regulation of amyloid precursor protein biosynthetic process"/>
    <property type="evidence" value="ECO:0007669"/>
    <property type="project" value="TreeGrafter"/>
</dbReference>
<dbReference type="FunFam" id="3.30.70.100:FF:000025">
    <property type="entry name" value="N-terminal EF-hand calcium-binding protein 1"/>
    <property type="match status" value="1"/>
</dbReference>
<dbReference type="FunFam" id="1.10.238.10:FF:000642">
    <property type="entry name" value="Uncharacterized protein"/>
    <property type="match status" value="1"/>
</dbReference>
<dbReference type="Gene3D" id="3.30.70.100">
    <property type="match status" value="1"/>
</dbReference>
<dbReference type="Gene3D" id="1.10.238.10">
    <property type="entry name" value="EF-hand"/>
    <property type="match status" value="1"/>
</dbReference>
<dbReference type="InterPro" id="IPR007138">
    <property type="entry name" value="ABM_dom"/>
</dbReference>
<dbReference type="InterPro" id="IPR011008">
    <property type="entry name" value="Dimeric_a/b-barrel"/>
</dbReference>
<dbReference type="InterPro" id="IPR011992">
    <property type="entry name" value="EF-hand-dom_pair"/>
</dbReference>
<dbReference type="InterPro" id="IPR018247">
    <property type="entry name" value="EF_Hand_1_Ca_BS"/>
</dbReference>
<dbReference type="InterPro" id="IPR002048">
    <property type="entry name" value="EF_hand_dom"/>
</dbReference>
<dbReference type="InterPro" id="IPR039862">
    <property type="entry name" value="NECAB1/2/3"/>
</dbReference>
<dbReference type="PANTHER" id="PTHR12178">
    <property type="entry name" value="EF-HAND DOMAIN-CONTAINING PROTEIN"/>
    <property type="match status" value="1"/>
</dbReference>
<dbReference type="PANTHER" id="PTHR12178:SF11">
    <property type="entry name" value="N-TERMINAL EF-HAND CALCIUM-BINDING PROTEIN 1"/>
    <property type="match status" value="1"/>
</dbReference>
<dbReference type="Pfam" id="PF03992">
    <property type="entry name" value="ABM"/>
    <property type="match status" value="1"/>
</dbReference>
<dbReference type="SMART" id="SM00054">
    <property type="entry name" value="EFh"/>
    <property type="match status" value="2"/>
</dbReference>
<dbReference type="SUPFAM" id="SSF54909">
    <property type="entry name" value="Dimeric alpha+beta barrel"/>
    <property type="match status" value="1"/>
</dbReference>
<dbReference type="SUPFAM" id="SSF47473">
    <property type="entry name" value="EF-hand"/>
    <property type="match status" value="1"/>
</dbReference>
<dbReference type="PROSITE" id="PS51725">
    <property type="entry name" value="ABM"/>
    <property type="match status" value="1"/>
</dbReference>
<dbReference type="PROSITE" id="PS00018">
    <property type="entry name" value="EF_HAND_1"/>
    <property type="match status" value="1"/>
</dbReference>
<dbReference type="PROSITE" id="PS50222">
    <property type="entry name" value="EF_HAND_2"/>
    <property type="match status" value="2"/>
</dbReference>
<feature type="chain" id="PRO_0000282611" description="N-terminal EF-hand calcium-binding protein 1">
    <location>
        <begin position="1"/>
        <end position="352"/>
    </location>
</feature>
<feature type="domain" description="EF-hand 1" evidence="6">
    <location>
        <begin position="26"/>
        <end position="61"/>
    </location>
</feature>
<feature type="domain" description="EF-hand 2" evidence="6">
    <location>
        <begin position="60"/>
        <end position="95"/>
    </location>
</feature>
<feature type="domain" description="ABM">
    <location>
        <begin position="252"/>
        <end position="340"/>
    </location>
</feature>
<feature type="region of interest" description="Disordered" evidence="7">
    <location>
        <begin position="180"/>
        <end position="202"/>
    </location>
</feature>
<feature type="coiled-coil region" evidence="5">
    <location>
        <begin position="135"/>
        <end position="163"/>
    </location>
</feature>
<feature type="coiled-coil region" evidence="5">
    <location>
        <begin position="209"/>
        <end position="275"/>
    </location>
</feature>
<feature type="compositionally biased region" description="Polar residues" evidence="7">
    <location>
        <begin position="190"/>
        <end position="202"/>
    </location>
</feature>
<feature type="binding site" evidence="6">
    <location>
        <position position="39"/>
    </location>
    <ligand>
        <name>Ca(2+)</name>
        <dbReference type="ChEBI" id="CHEBI:29108"/>
    </ligand>
</feature>
<feature type="binding site" evidence="6">
    <location>
        <position position="41"/>
    </location>
    <ligand>
        <name>Ca(2+)</name>
        <dbReference type="ChEBI" id="CHEBI:29108"/>
    </ligand>
</feature>
<feature type="binding site" evidence="6">
    <location>
        <position position="43"/>
    </location>
    <ligand>
        <name>Ca(2+)</name>
        <dbReference type="ChEBI" id="CHEBI:29108"/>
    </ligand>
</feature>
<feature type="binding site" evidence="6">
    <location>
        <position position="45"/>
    </location>
    <ligand>
        <name>Ca(2+)</name>
        <dbReference type="ChEBI" id="CHEBI:29108"/>
    </ligand>
</feature>
<feature type="binding site" evidence="6">
    <location>
        <position position="50"/>
    </location>
    <ligand>
        <name>Ca(2+)</name>
        <dbReference type="ChEBI" id="CHEBI:29108"/>
    </ligand>
</feature>
<feature type="modified residue" description="Phosphoserine" evidence="4">
    <location>
        <position position="4"/>
    </location>
</feature>
<feature type="modified residue" description="Phosphoserine" evidence="2">
    <location>
        <position position="192"/>
    </location>
</feature>
<feature type="modified residue" description="Phosphoserine" evidence="2">
    <location>
        <position position="197"/>
    </location>
</feature>
<reference key="1">
    <citation type="submission" date="2004-11" db="EMBL/GenBank/DDBJ databases">
        <authorList>
            <consortium name="The German cDNA consortium"/>
        </authorList>
    </citation>
    <scope>NUCLEOTIDE SEQUENCE [LARGE SCALE MRNA]</scope>
    <source>
        <tissue>Brain cortex</tissue>
    </source>
</reference>
<comment type="subunit">
    <text evidence="3">Interacts with STX1. May interact with CPNE6.</text>
</comment>
<comment type="subcellular location">
    <subcellularLocation>
        <location evidence="1">Cytoplasm</location>
    </subcellularLocation>
</comment>